<sequence length="196" mass="20853">MKVAKDLVVSLAYQVRTEDGVLVDESPVSAPLDYLHGHGSLISGLETALEGHEVGDKFDVAVGANDAYGQYDENLVQRVPKDVFMGVDELQVGMRFLAETDQGPVPVEITAVEDDHVVVDGNHMLAGQNLKFNVEVVAIREATEEELAHGHVHGAHDHHHDHDHDGCCGGHGHDHGHEHGGEGCCGGKGNGGCGCH</sequence>
<comment type="function">
    <text evidence="1">Folding helper with both chaperone and peptidyl-prolyl cis-trans isomerase (PPIase) activities. Chaperone activity prevents aggregation of unfolded or partially folded proteins and promotes their correct folding. PPIases catalyze the cis-trans isomerization of Xaa-Pro bonds of peptides, which accelerates slow steps of protein folding and thus shortens the lifetime of intermediates. Both strategies lower the concentration of intermediates and increase the productivity and yield of the folding reaction. SlyD could be involved in Tat-dependent translocation, by binding to the Tat-type signal of folded proteins (By similarity).</text>
</comment>
<comment type="function">
    <text evidence="1">Also involved in hydrogenase metallocenter assembly, probably by participating in the nickel insertion step. This function in hydrogenase biosynthesis requires chaperone activity and the presence of the metal-binding domain, but not PPIase activity (By similarity).</text>
</comment>
<comment type="catalytic activity">
    <reaction>
        <text>[protein]-peptidylproline (omega=180) = [protein]-peptidylproline (omega=0)</text>
        <dbReference type="Rhea" id="RHEA:16237"/>
        <dbReference type="Rhea" id="RHEA-COMP:10747"/>
        <dbReference type="Rhea" id="RHEA-COMP:10748"/>
        <dbReference type="ChEBI" id="CHEBI:83833"/>
        <dbReference type="ChEBI" id="CHEBI:83834"/>
        <dbReference type="EC" id="5.2.1.8"/>
    </reaction>
</comment>
<comment type="subunit">
    <text evidence="1">Monomer. Binds to a broad range of unrelated Tat signal sequences. Interacts with the hydrogenase nickel incorporation protein HypB (By similarity).</text>
</comment>
<comment type="subcellular location">
    <subcellularLocation>
        <location evidence="1">Cytoplasm</location>
    </subcellularLocation>
</comment>
<comment type="domain">
    <text evidence="1">The N-terminal region consists of two globular folded domains that contain prolyl isomerase and chaperone activities.</text>
</comment>
<comment type="domain">
    <text evidence="1">The C-terminal region binds nickel ions.</text>
</comment>
<comment type="similarity">
    <text evidence="4">Belongs to the FKBP-type PPIase family.</text>
</comment>
<organism>
    <name type="scientific">Escherichia coli O157:H7</name>
    <dbReference type="NCBI Taxonomy" id="83334"/>
    <lineage>
        <taxon>Bacteria</taxon>
        <taxon>Pseudomonadati</taxon>
        <taxon>Pseudomonadota</taxon>
        <taxon>Gammaproteobacteria</taxon>
        <taxon>Enterobacterales</taxon>
        <taxon>Enterobacteriaceae</taxon>
        <taxon>Escherichia</taxon>
    </lineage>
</organism>
<dbReference type="EC" id="5.2.1.8"/>
<dbReference type="EMBL" id="AE005174">
    <property type="protein sequence ID" value="AAG58456.1"/>
    <property type="molecule type" value="Genomic_DNA"/>
</dbReference>
<dbReference type="EMBL" id="BA000007">
    <property type="protein sequence ID" value="BAB37623.1"/>
    <property type="molecule type" value="Genomic_DNA"/>
</dbReference>
<dbReference type="PIR" id="D85999">
    <property type="entry name" value="D85999"/>
</dbReference>
<dbReference type="PIR" id="H91153">
    <property type="entry name" value="H91153"/>
</dbReference>
<dbReference type="RefSeq" id="NP_312227.1">
    <property type="nucleotide sequence ID" value="NC_002695.1"/>
</dbReference>
<dbReference type="RefSeq" id="WP_000861334.1">
    <property type="nucleotide sequence ID" value="NZ_VOAI01000004.1"/>
</dbReference>
<dbReference type="BMRB" id="P0A9L1"/>
<dbReference type="SMR" id="P0A9L1"/>
<dbReference type="STRING" id="155864.Z4707"/>
<dbReference type="ABCD" id="P0A9L1">
    <property type="antibodies" value="5 sequenced antibodies"/>
</dbReference>
<dbReference type="DNASU" id="961279"/>
<dbReference type="GeneID" id="915947"/>
<dbReference type="GeneID" id="93778649"/>
<dbReference type="KEGG" id="ece:Z4707"/>
<dbReference type="KEGG" id="ecs:ECs_4200"/>
<dbReference type="PATRIC" id="fig|386585.9.peg.4383"/>
<dbReference type="eggNOG" id="COG1047">
    <property type="taxonomic scope" value="Bacteria"/>
</dbReference>
<dbReference type="HOGENOM" id="CLU_098197_1_0_6"/>
<dbReference type="OMA" id="HSHEGGC"/>
<dbReference type="Proteomes" id="UP000000558">
    <property type="component" value="Chromosome"/>
</dbReference>
<dbReference type="Proteomes" id="UP000002519">
    <property type="component" value="Chromosome"/>
</dbReference>
<dbReference type="GO" id="GO:0005737">
    <property type="term" value="C:cytoplasm"/>
    <property type="evidence" value="ECO:0007669"/>
    <property type="project" value="UniProtKB-SubCell"/>
</dbReference>
<dbReference type="GO" id="GO:0046872">
    <property type="term" value="F:metal ion binding"/>
    <property type="evidence" value="ECO:0007669"/>
    <property type="project" value="UniProtKB-KW"/>
</dbReference>
<dbReference type="GO" id="GO:0003755">
    <property type="term" value="F:peptidyl-prolyl cis-trans isomerase activity"/>
    <property type="evidence" value="ECO:0007669"/>
    <property type="project" value="UniProtKB-KW"/>
</dbReference>
<dbReference type="GO" id="GO:0042026">
    <property type="term" value="P:protein refolding"/>
    <property type="evidence" value="ECO:0007669"/>
    <property type="project" value="UniProtKB-ARBA"/>
</dbReference>
<dbReference type="FunFam" id="2.40.10.330:FF:000001">
    <property type="entry name" value="Peptidyl-prolyl cis-trans isomerase"/>
    <property type="match status" value="1"/>
</dbReference>
<dbReference type="Gene3D" id="2.40.10.330">
    <property type="match status" value="1"/>
</dbReference>
<dbReference type="Gene3D" id="3.10.50.40">
    <property type="match status" value="1"/>
</dbReference>
<dbReference type="InterPro" id="IPR046357">
    <property type="entry name" value="PPIase_dom_sf"/>
</dbReference>
<dbReference type="InterPro" id="IPR001179">
    <property type="entry name" value="PPIase_FKBP_dom"/>
</dbReference>
<dbReference type="InterPro" id="IPR048261">
    <property type="entry name" value="SlpA/SlyD-like_ins_sf"/>
</dbReference>
<dbReference type="NCBIfam" id="NF008008">
    <property type="entry name" value="PRK10737.1"/>
    <property type="match status" value="1"/>
</dbReference>
<dbReference type="PANTHER" id="PTHR47861">
    <property type="entry name" value="FKBP-TYPE PEPTIDYL-PROLYL CIS-TRANS ISOMERASE SLYD"/>
    <property type="match status" value="1"/>
</dbReference>
<dbReference type="PANTHER" id="PTHR47861:SF3">
    <property type="entry name" value="FKBP-TYPE PEPTIDYL-PROLYL CIS-TRANS ISOMERASE SLYD"/>
    <property type="match status" value="1"/>
</dbReference>
<dbReference type="Pfam" id="PF00254">
    <property type="entry name" value="FKBP_C"/>
    <property type="match status" value="1"/>
</dbReference>
<dbReference type="SUPFAM" id="SSF54534">
    <property type="entry name" value="FKBP-like"/>
    <property type="match status" value="1"/>
</dbReference>
<dbReference type="PROSITE" id="PS50059">
    <property type="entry name" value="FKBP_PPIASE"/>
    <property type="match status" value="1"/>
</dbReference>
<protein>
    <recommendedName>
        <fullName>FKBP-type peptidyl-prolyl cis-trans isomerase SlyD</fullName>
        <shortName>PPIase</shortName>
        <ecNumber>5.2.1.8</ecNumber>
    </recommendedName>
    <alternativeName>
        <fullName>Metallochaperone SlyD</fullName>
    </alternativeName>
</protein>
<accession>P0A9L1</accession>
<accession>P30856</accession>
<proteinExistence type="inferred from homology"/>
<evidence type="ECO:0000250" key="1"/>
<evidence type="ECO:0000255" key="2"/>
<evidence type="ECO:0000255" key="3">
    <source>
        <dbReference type="PROSITE-ProRule" id="PRU00277"/>
    </source>
</evidence>
<evidence type="ECO:0000305" key="4"/>
<gene>
    <name type="primary">slyD</name>
    <name type="ordered locus">Z4707</name>
    <name type="ordered locus">ECs4200</name>
</gene>
<name>SLYD_ECO57</name>
<keyword id="KW-0143">Chaperone</keyword>
<keyword id="KW-0963">Cytoplasm</keyword>
<keyword id="KW-0413">Isomerase</keyword>
<keyword id="KW-0479">Metal-binding</keyword>
<keyword id="KW-0533">Nickel</keyword>
<keyword id="KW-1185">Reference proteome</keyword>
<keyword id="KW-0697">Rotamase</keyword>
<reference key="1">
    <citation type="journal article" date="2001" name="Nature">
        <title>Genome sequence of enterohaemorrhagic Escherichia coli O157:H7.</title>
        <authorList>
            <person name="Perna N.T."/>
            <person name="Plunkett G. III"/>
            <person name="Burland V."/>
            <person name="Mau B."/>
            <person name="Glasner J.D."/>
            <person name="Rose D.J."/>
            <person name="Mayhew G.F."/>
            <person name="Evans P.S."/>
            <person name="Gregor J."/>
            <person name="Kirkpatrick H.A."/>
            <person name="Posfai G."/>
            <person name="Hackett J."/>
            <person name="Klink S."/>
            <person name="Boutin A."/>
            <person name="Shao Y."/>
            <person name="Miller L."/>
            <person name="Grotbeck E.J."/>
            <person name="Davis N.W."/>
            <person name="Lim A."/>
            <person name="Dimalanta E.T."/>
            <person name="Potamousis K."/>
            <person name="Apodaca J."/>
            <person name="Anantharaman T.S."/>
            <person name="Lin J."/>
            <person name="Yen G."/>
            <person name="Schwartz D.C."/>
            <person name="Welch R.A."/>
            <person name="Blattner F.R."/>
        </authorList>
    </citation>
    <scope>NUCLEOTIDE SEQUENCE [LARGE SCALE GENOMIC DNA]</scope>
    <source>
        <strain>O157:H7 / EDL933 / ATCC 700927 / EHEC</strain>
    </source>
</reference>
<reference key="2">
    <citation type="journal article" date="2001" name="DNA Res.">
        <title>Complete genome sequence of enterohemorrhagic Escherichia coli O157:H7 and genomic comparison with a laboratory strain K-12.</title>
        <authorList>
            <person name="Hayashi T."/>
            <person name="Makino K."/>
            <person name="Ohnishi M."/>
            <person name="Kurokawa K."/>
            <person name="Ishii K."/>
            <person name="Yokoyama K."/>
            <person name="Han C.-G."/>
            <person name="Ohtsubo E."/>
            <person name="Nakayama K."/>
            <person name="Murata T."/>
            <person name="Tanaka M."/>
            <person name="Tobe T."/>
            <person name="Iida T."/>
            <person name="Takami H."/>
            <person name="Honda T."/>
            <person name="Sasakawa C."/>
            <person name="Ogasawara N."/>
            <person name="Yasunaga T."/>
            <person name="Kuhara S."/>
            <person name="Shiba T."/>
            <person name="Hattori M."/>
            <person name="Shinagawa H."/>
        </authorList>
    </citation>
    <scope>NUCLEOTIDE SEQUENCE [LARGE SCALE GENOMIC DNA]</scope>
    <source>
        <strain>O157:H7 / Sakai / RIMD 0509952 / EHEC</strain>
    </source>
</reference>
<feature type="chain" id="PRO_0000075356" description="FKBP-type peptidyl-prolyl cis-trans isomerase SlyD">
    <location>
        <begin position="1"/>
        <end position="196"/>
    </location>
</feature>
<feature type="domain" description="PPIase FKBP-type" evidence="3">
    <location>
        <begin position="1"/>
        <end position="95"/>
    </location>
</feature>
<feature type="region of interest" description="PPIase first part" evidence="1">
    <location>
        <begin position="1"/>
        <end position="69"/>
    </location>
</feature>
<feature type="region of interest" description="IF-chaperone" evidence="1">
    <location>
        <begin position="76"/>
        <end position="120"/>
    </location>
</feature>
<feature type="region of interest" description="PPIase second part" evidence="1">
    <location>
        <begin position="129"/>
        <end position="151"/>
    </location>
</feature>
<feature type="binding site" evidence="2">
    <location>
        <position position="167"/>
    </location>
    <ligand>
        <name>Ni(2+)</name>
        <dbReference type="ChEBI" id="CHEBI:49786"/>
    </ligand>
</feature>
<feature type="binding site" evidence="2">
    <location>
        <position position="168"/>
    </location>
    <ligand>
        <name>Ni(2+)</name>
        <dbReference type="ChEBI" id="CHEBI:49786"/>
    </ligand>
</feature>
<feature type="binding site" evidence="2">
    <location>
        <position position="184"/>
    </location>
    <ligand>
        <name>Ni(2+)</name>
        <dbReference type="ChEBI" id="CHEBI:49786"/>
    </ligand>
</feature>
<feature type="binding site" evidence="2">
    <location>
        <position position="185"/>
    </location>
    <ligand>
        <name>Ni(2+)</name>
        <dbReference type="ChEBI" id="CHEBI:49786"/>
    </ligand>
</feature>
<feature type="binding site" evidence="2">
    <location>
        <position position="193"/>
    </location>
    <ligand>
        <name>Ni(2+)</name>
        <dbReference type="ChEBI" id="CHEBI:49786"/>
    </ligand>
</feature>
<feature type="binding site" evidence="2">
    <location>
        <position position="195"/>
    </location>
    <ligand>
        <name>Ni(2+)</name>
        <dbReference type="ChEBI" id="CHEBI:49786"/>
    </ligand>
</feature>